<evidence type="ECO:0000255" key="1">
    <source>
        <dbReference type="HAMAP-Rule" id="MF_00181"/>
    </source>
</evidence>
<proteinExistence type="inferred from homology"/>
<dbReference type="EC" id="3.4.11.1" evidence="1"/>
<dbReference type="EC" id="3.4.11.10" evidence="1"/>
<dbReference type="EMBL" id="CT573326">
    <property type="protein sequence ID" value="CAK17126.1"/>
    <property type="molecule type" value="Genomic_DNA"/>
</dbReference>
<dbReference type="RefSeq" id="WP_011535497.1">
    <property type="nucleotide sequence ID" value="NC_008027.1"/>
</dbReference>
<dbReference type="SMR" id="Q1I5F9"/>
<dbReference type="STRING" id="384676.PSEEN4443"/>
<dbReference type="MEROPS" id="M17.003"/>
<dbReference type="GeneID" id="32807440"/>
<dbReference type="KEGG" id="pen:PSEEN4443"/>
<dbReference type="eggNOG" id="COG0260">
    <property type="taxonomic scope" value="Bacteria"/>
</dbReference>
<dbReference type="HOGENOM" id="CLU_013734_2_2_6"/>
<dbReference type="OrthoDB" id="9809354at2"/>
<dbReference type="Proteomes" id="UP000000658">
    <property type="component" value="Chromosome"/>
</dbReference>
<dbReference type="GO" id="GO:0005737">
    <property type="term" value="C:cytoplasm"/>
    <property type="evidence" value="ECO:0007669"/>
    <property type="project" value="UniProtKB-SubCell"/>
</dbReference>
<dbReference type="GO" id="GO:0030145">
    <property type="term" value="F:manganese ion binding"/>
    <property type="evidence" value="ECO:0007669"/>
    <property type="project" value="UniProtKB-UniRule"/>
</dbReference>
<dbReference type="GO" id="GO:0070006">
    <property type="term" value="F:metalloaminopeptidase activity"/>
    <property type="evidence" value="ECO:0007669"/>
    <property type="project" value="InterPro"/>
</dbReference>
<dbReference type="GO" id="GO:0006508">
    <property type="term" value="P:proteolysis"/>
    <property type="evidence" value="ECO:0007669"/>
    <property type="project" value="UniProtKB-KW"/>
</dbReference>
<dbReference type="CDD" id="cd00433">
    <property type="entry name" value="Peptidase_M17"/>
    <property type="match status" value="1"/>
</dbReference>
<dbReference type="FunFam" id="3.40.630.10:FF:000004">
    <property type="entry name" value="Probable cytosol aminopeptidase"/>
    <property type="match status" value="1"/>
</dbReference>
<dbReference type="Gene3D" id="3.40.220.10">
    <property type="entry name" value="Leucine Aminopeptidase, subunit E, domain 1"/>
    <property type="match status" value="1"/>
</dbReference>
<dbReference type="Gene3D" id="3.40.630.10">
    <property type="entry name" value="Zn peptidases"/>
    <property type="match status" value="1"/>
</dbReference>
<dbReference type="HAMAP" id="MF_00181">
    <property type="entry name" value="Cytosol_peptidase_M17"/>
    <property type="match status" value="1"/>
</dbReference>
<dbReference type="InterPro" id="IPR011356">
    <property type="entry name" value="Leucine_aapep/pepB"/>
</dbReference>
<dbReference type="InterPro" id="IPR043472">
    <property type="entry name" value="Macro_dom-like"/>
</dbReference>
<dbReference type="InterPro" id="IPR000819">
    <property type="entry name" value="Peptidase_M17_C"/>
</dbReference>
<dbReference type="InterPro" id="IPR023042">
    <property type="entry name" value="Peptidase_M17_leu_NH2_pept"/>
</dbReference>
<dbReference type="InterPro" id="IPR008283">
    <property type="entry name" value="Peptidase_M17_N"/>
</dbReference>
<dbReference type="NCBIfam" id="NF002073">
    <property type="entry name" value="PRK00913.1-2"/>
    <property type="match status" value="1"/>
</dbReference>
<dbReference type="NCBIfam" id="NF002074">
    <property type="entry name" value="PRK00913.1-4"/>
    <property type="match status" value="1"/>
</dbReference>
<dbReference type="NCBIfam" id="NF002077">
    <property type="entry name" value="PRK00913.2-4"/>
    <property type="match status" value="1"/>
</dbReference>
<dbReference type="PANTHER" id="PTHR11963:SF23">
    <property type="entry name" value="CYTOSOL AMINOPEPTIDASE"/>
    <property type="match status" value="1"/>
</dbReference>
<dbReference type="PANTHER" id="PTHR11963">
    <property type="entry name" value="LEUCINE AMINOPEPTIDASE-RELATED"/>
    <property type="match status" value="1"/>
</dbReference>
<dbReference type="Pfam" id="PF00883">
    <property type="entry name" value="Peptidase_M17"/>
    <property type="match status" value="1"/>
</dbReference>
<dbReference type="Pfam" id="PF02789">
    <property type="entry name" value="Peptidase_M17_N"/>
    <property type="match status" value="1"/>
</dbReference>
<dbReference type="PRINTS" id="PR00481">
    <property type="entry name" value="LAMNOPPTDASE"/>
</dbReference>
<dbReference type="SUPFAM" id="SSF52949">
    <property type="entry name" value="Macro domain-like"/>
    <property type="match status" value="1"/>
</dbReference>
<dbReference type="SUPFAM" id="SSF53187">
    <property type="entry name" value="Zn-dependent exopeptidases"/>
    <property type="match status" value="1"/>
</dbReference>
<dbReference type="PROSITE" id="PS00631">
    <property type="entry name" value="CYTOSOL_AP"/>
    <property type="match status" value="1"/>
</dbReference>
<feature type="chain" id="PRO_1000019956" description="Probable cytosol aminopeptidase">
    <location>
        <begin position="1"/>
        <end position="497"/>
    </location>
</feature>
<feature type="active site" evidence="1">
    <location>
        <position position="279"/>
    </location>
</feature>
<feature type="active site" evidence="1">
    <location>
        <position position="353"/>
    </location>
</feature>
<feature type="binding site" evidence="1">
    <location>
        <position position="267"/>
    </location>
    <ligand>
        <name>Mn(2+)</name>
        <dbReference type="ChEBI" id="CHEBI:29035"/>
        <label>2</label>
    </ligand>
</feature>
<feature type="binding site" evidence="1">
    <location>
        <position position="272"/>
    </location>
    <ligand>
        <name>Mn(2+)</name>
        <dbReference type="ChEBI" id="CHEBI:29035"/>
        <label>1</label>
    </ligand>
</feature>
<feature type="binding site" evidence="1">
    <location>
        <position position="272"/>
    </location>
    <ligand>
        <name>Mn(2+)</name>
        <dbReference type="ChEBI" id="CHEBI:29035"/>
        <label>2</label>
    </ligand>
</feature>
<feature type="binding site" evidence="1">
    <location>
        <position position="290"/>
    </location>
    <ligand>
        <name>Mn(2+)</name>
        <dbReference type="ChEBI" id="CHEBI:29035"/>
        <label>2</label>
    </ligand>
</feature>
<feature type="binding site" evidence="1">
    <location>
        <position position="349"/>
    </location>
    <ligand>
        <name>Mn(2+)</name>
        <dbReference type="ChEBI" id="CHEBI:29035"/>
        <label>1</label>
    </ligand>
</feature>
<feature type="binding site" evidence="1">
    <location>
        <position position="351"/>
    </location>
    <ligand>
        <name>Mn(2+)</name>
        <dbReference type="ChEBI" id="CHEBI:29035"/>
        <label>1</label>
    </ligand>
</feature>
<feature type="binding site" evidence="1">
    <location>
        <position position="351"/>
    </location>
    <ligand>
        <name>Mn(2+)</name>
        <dbReference type="ChEBI" id="CHEBI:29035"/>
        <label>2</label>
    </ligand>
</feature>
<comment type="function">
    <text evidence="1">Presumably involved in the processing and regular turnover of intracellular proteins. Catalyzes the removal of unsubstituted N-terminal amino acids from various peptides.</text>
</comment>
<comment type="catalytic activity">
    <reaction evidence="1">
        <text>Release of an N-terminal amino acid, Xaa-|-Yaa-, in which Xaa is preferably Leu, but may be other amino acids including Pro although not Arg or Lys, and Yaa may be Pro. Amino acid amides and methyl esters are also readily hydrolyzed, but rates on arylamides are exceedingly low.</text>
        <dbReference type="EC" id="3.4.11.1"/>
    </reaction>
</comment>
<comment type="catalytic activity">
    <reaction evidence="1">
        <text>Release of an N-terminal amino acid, preferentially leucine, but not glutamic or aspartic acids.</text>
        <dbReference type="EC" id="3.4.11.10"/>
    </reaction>
</comment>
<comment type="cofactor">
    <cofactor evidence="1">
        <name>Mn(2+)</name>
        <dbReference type="ChEBI" id="CHEBI:29035"/>
    </cofactor>
    <text evidence="1">Binds 2 manganese ions per subunit.</text>
</comment>
<comment type="subcellular location">
    <subcellularLocation>
        <location evidence="1">Cytoplasm</location>
    </subcellularLocation>
</comment>
<comment type="similarity">
    <text evidence="1">Belongs to the peptidase M17 family.</text>
</comment>
<accession>Q1I5F9</accession>
<organism>
    <name type="scientific">Pseudomonas entomophila (strain L48)</name>
    <dbReference type="NCBI Taxonomy" id="384676"/>
    <lineage>
        <taxon>Bacteria</taxon>
        <taxon>Pseudomonadati</taxon>
        <taxon>Pseudomonadota</taxon>
        <taxon>Gammaproteobacteria</taxon>
        <taxon>Pseudomonadales</taxon>
        <taxon>Pseudomonadaceae</taxon>
        <taxon>Pseudomonas</taxon>
    </lineage>
</organism>
<protein>
    <recommendedName>
        <fullName evidence="1">Probable cytosol aminopeptidase</fullName>
        <ecNumber evidence="1">3.4.11.1</ecNumber>
    </recommendedName>
    <alternativeName>
        <fullName evidence="1">Leucine aminopeptidase</fullName>
        <shortName evidence="1">LAP</shortName>
        <ecNumber evidence="1">3.4.11.10</ecNumber>
    </alternativeName>
    <alternativeName>
        <fullName evidence="1">Leucyl aminopeptidase</fullName>
    </alternativeName>
</protein>
<reference key="1">
    <citation type="journal article" date="2006" name="Nat. Biotechnol.">
        <title>Complete genome sequence of the entomopathogenic and metabolically versatile soil bacterium Pseudomonas entomophila.</title>
        <authorList>
            <person name="Vodovar N."/>
            <person name="Vallenet D."/>
            <person name="Cruveiller S."/>
            <person name="Rouy Z."/>
            <person name="Barbe V."/>
            <person name="Acosta C."/>
            <person name="Cattolico L."/>
            <person name="Jubin C."/>
            <person name="Lajus A."/>
            <person name="Segurens B."/>
            <person name="Vacherie B."/>
            <person name="Wincker P."/>
            <person name="Weissenbach J."/>
            <person name="Lemaitre B."/>
            <person name="Medigue C."/>
            <person name="Boccard F."/>
        </authorList>
    </citation>
    <scope>NUCLEOTIDE SEQUENCE [LARGE SCALE GENOMIC DNA]</scope>
    <source>
        <strain>L48</strain>
    </source>
</reference>
<gene>
    <name evidence="1" type="primary">pepA</name>
    <name type="ordered locus">PSEEN4443</name>
</gene>
<keyword id="KW-0031">Aminopeptidase</keyword>
<keyword id="KW-0963">Cytoplasm</keyword>
<keyword id="KW-0378">Hydrolase</keyword>
<keyword id="KW-0464">Manganese</keyword>
<keyword id="KW-0479">Metal-binding</keyword>
<keyword id="KW-0645">Protease</keyword>
<name>AMPA_PSEE4</name>
<sequence>MELVVKSVAAVSVKTATLVVPVGEGRKLGATAKAVDLASEGAISAVLKRGDLAGKPGQTLLLHSVPGLKAERVLLVGSGKDEALGDRAWRKLAASVAGVLKGLGGSDAVLALDDIAVTGRDGHYGKYRLLAETLLDSDYVFDRYKSQKAEPRALKKITLLADKAGLAEAERAVKHASAIATGMAFTRDLGNLPPNVCHPSFLAEQAKGLGKAHKGLKVEVLDEKKIKELGMGAFYAVGQGSDQPPRLIVLNYQGGKKSEKPFVLVGKGITFDTGGISLKPGAGMDEMKYDMCGAASVFGTLRAVLELQLPINLVCLLACAENMPSGGATRPGDIVTTMSGQTVEILNTDAEGRLVLCDTLTYAERFKPQAVIDIATLTGACIVALGSHTSGLMGNNDELVGQLLDAGKRADDRAWQLPLFDEYQEQLDSPFADIANIGGPKAGTITAGCFLSRFAKAYNWAHLDIAGTAWISGGKDKGASGRPVPLLTQYLLDRAGA</sequence>